<organism>
    <name type="scientific">Thermosipho africanus (strain TCF52B)</name>
    <dbReference type="NCBI Taxonomy" id="484019"/>
    <lineage>
        <taxon>Bacteria</taxon>
        <taxon>Thermotogati</taxon>
        <taxon>Thermotogota</taxon>
        <taxon>Thermotogae</taxon>
        <taxon>Thermotogales</taxon>
        <taxon>Fervidobacteriaceae</taxon>
        <taxon>Thermosipho</taxon>
    </lineage>
</organism>
<name>APT_THEAB</name>
<comment type="function">
    <text evidence="1">Catalyzes a salvage reaction resulting in the formation of AMP, that is energically less costly than de novo synthesis.</text>
</comment>
<comment type="catalytic activity">
    <reaction evidence="1">
        <text>AMP + diphosphate = 5-phospho-alpha-D-ribose 1-diphosphate + adenine</text>
        <dbReference type="Rhea" id="RHEA:16609"/>
        <dbReference type="ChEBI" id="CHEBI:16708"/>
        <dbReference type="ChEBI" id="CHEBI:33019"/>
        <dbReference type="ChEBI" id="CHEBI:58017"/>
        <dbReference type="ChEBI" id="CHEBI:456215"/>
        <dbReference type="EC" id="2.4.2.7"/>
    </reaction>
</comment>
<comment type="pathway">
    <text evidence="1">Purine metabolism; AMP biosynthesis via salvage pathway; AMP from adenine: step 1/1.</text>
</comment>
<comment type="subunit">
    <text evidence="1">Homodimer.</text>
</comment>
<comment type="subcellular location">
    <subcellularLocation>
        <location evidence="1">Cytoplasm</location>
    </subcellularLocation>
</comment>
<comment type="similarity">
    <text evidence="1">Belongs to the purine/pyrimidine phosphoribosyltransferase family.</text>
</comment>
<evidence type="ECO:0000255" key="1">
    <source>
        <dbReference type="HAMAP-Rule" id="MF_00004"/>
    </source>
</evidence>
<dbReference type="EC" id="2.4.2.7" evidence="1"/>
<dbReference type="EMBL" id="CP001185">
    <property type="protein sequence ID" value="ACJ74646.1"/>
    <property type="molecule type" value="Genomic_DNA"/>
</dbReference>
<dbReference type="RefSeq" id="WP_004103571.1">
    <property type="nucleotide sequence ID" value="NC_011653.1"/>
</dbReference>
<dbReference type="SMR" id="B7IEY2"/>
<dbReference type="STRING" id="484019.THA_138"/>
<dbReference type="KEGG" id="taf:THA_138"/>
<dbReference type="eggNOG" id="COG0503">
    <property type="taxonomic scope" value="Bacteria"/>
</dbReference>
<dbReference type="HOGENOM" id="CLU_063339_3_0_0"/>
<dbReference type="OrthoDB" id="9803963at2"/>
<dbReference type="UniPathway" id="UPA00588">
    <property type="reaction ID" value="UER00646"/>
</dbReference>
<dbReference type="Proteomes" id="UP000002453">
    <property type="component" value="Chromosome"/>
</dbReference>
<dbReference type="GO" id="GO:0005737">
    <property type="term" value="C:cytoplasm"/>
    <property type="evidence" value="ECO:0007669"/>
    <property type="project" value="UniProtKB-SubCell"/>
</dbReference>
<dbReference type="GO" id="GO:0002055">
    <property type="term" value="F:adenine binding"/>
    <property type="evidence" value="ECO:0007669"/>
    <property type="project" value="TreeGrafter"/>
</dbReference>
<dbReference type="GO" id="GO:0003999">
    <property type="term" value="F:adenine phosphoribosyltransferase activity"/>
    <property type="evidence" value="ECO:0007669"/>
    <property type="project" value="UniProtKB-UniRule"/>
</dbReference>
<dbReference type="GO" id="GO:0016208">
    <property type="term" value="F:AMP binding"/>
    <property type="evidence" value="ECO:0007669"/>
    <property type="project" value="TreeGrafter"/>
</dbReference>
<dbReference type="GO" id="GO:0006168">
    <property type="term" value="P:adenine salvage"/>
    <property type="evidence" value="ECO:0007669"/>
    <property type="project" value="InterPro"/>
</dbReference>
<dbReference type="GO" id="GO:0044209">
    <property type="term" value="P:AMP salvage"/>
    <property type="evidence" value="ECO:0007669"/>
    <property type="project" value="UniProtKB-UniRule"/>
</dbReference>
<dbReference type="GO" id="GO:0006166">
    <property type="term" value="P:purine ribonucleoside salvage"/>
    <property type="evidence" value="ECO:0007669"/>
    <property type="project" value="UniProtKB-KW"/>
</dbReference>
<dbReference type="CDD" id="cd06223">
    <property type="entry name" value="PRTases_typeI"/>
    <property type="match status" value="1"/>
</dbReference>
<dbReference type="FunFam" id="3.40.50.2020:FF:000021">
    <property type="entry name" value="Adenine phosphoribosyltransferase"/>
    <property type="match status" value="1"/>
</dbReference>
<dbReference type="Gene3D" id="3.40.50.2020">
    <property type="match status" value="1"/>
</dbReference>
<dbReference type="HAMAP" id="MF_00004">
    <property type="entry name" value="Aden_phosphoribosyltr"/>
    <property type="match status" value="1"/>
</dbReference>
<dbReference type="InterPro" id="IPR005764">
    <property type="entry name" value="Ade_phspho_trans"/>
</dbReference>
<dbReference type="InterPro" id="IPR000836">
    <property type="entry name" value="PRibTrfase_dom"/>
</dbReference>
<dbReference type="InterPro" id="IPR029057">
    <property type="entry name" value="PRTase-like"/>
</dbReference>
<dbReference type="InterPro" id="IPR050054">
    <property type="entry name" value="UPRTase/APRTase"/>
</dbReference>
<dbReference type="NCBIfam" id="TIGR01090">
    <property type="entry name" value="apt"/>
    <property type="match status" value="1"/>
</dbReference>
<dbReference type="NCBIfam" id="NF002633">
    <property type="entry name" value="PRK02304.1-2"/>
    <property type="match status" value="1"/>
</dbReference>
<dbReference type="NCBIfam" id="NF002634">
    <property type="entry name" value="PRK02304.1-3"/>
    <property type="match status" value="1"/>
</dbReference>
<dbReference type="NCBIfam" id="NF002636">
    <property type="entry name" value="PRK02304.1-5"/>
    <property type="match status" value="1"/>
</dbReference>
<dbReference type="PANTHER" id="PTHR32315">
    <property type="entry name" value="ADENINE PHOSPHORIBOSYLTRANSFERASE"/>
    <property type="match status" value="1"/>
</dbReference>
<dbReference type="PANTHER" id="PTHR32315:SF3">
    <property type="entry name" value="ADENINE PHOSPHORIBOSYLTRANSFERASE"/>
    <property type="match status" value="1"/>
</dbReference>
<dbReference type="Pfam" id="PF00156">
    <property type="entry name" value="Pribosyltran"/>
    <property type="match status" value="1"/>
</dbReference>
<dbReference type="SUPFAM" id="SSF53271">
    <property type="entry name" value="PRTase-like"/>
    <property type="match status" value="1"/>
</dbReference>
<dbReference type="PROSITE" id="PS00103">
    <property type="entry name" value="PUR_PYR_PR_TRANSFER"/>
    <property type="match status" value="1"/>
</dbReference>
<reference key="1">
    <citation type="journal article" date="2009" name="J. Bacteriol.">
        <title>The genome of Thermosipho africanus TCF52B: lateral genetic connections to the Firmicutes and Archaea.</title>
        <authorList>
            <person name="Nesboe C.L."/>
            <person name="Bapteste E."/>
            <person name="Curtis B."/>
            <person name="Dahle H."/>
            <person name="Lopez P."/>
            <person name="Macleod D."/>
            <person name="Dlutek M."/>
            <person name="Bowman S."/>
            <person name="Zhaxybayeva O."/>
            <person name="Birkeland N.-K."/>
            <person name="Doolittle W.F."/>
        </authorList>
    </citation>
    <scope>NUCLEOTIDE SEQUENCE [LARGE SCALE GENOMIC DNA]</scope>
    <source>
        <strain>TCF52B</strain>
    </source>
</reference>
<accession>B7IEY2</accession>
<keyword id="KW-0963">Cytoplasm</keyword>
<keyword id="KW-0328">Glycosyltransferase</keyword>
<keyword id="KW-0660">Purine salvage</keyword>
<keyword id="KW-1185">Reference proteome</keyword>
<keyword id="KW-0808">Transferase</keyword>
<gene>
    <name evidence="1" type="primary">apt</name>
    <name type="ordered locus">THA_138</name>
</gene>
<sequence>MDLRTFIRDIPDFPEKGIIFRDITPLLKDKEAFKHAIDMLAEKLSEIDFDLIVAPEARGFIFGGALSYKLNKGFIPVRKPGKLPYEVISEKYTLEYGEAELQMHVDSINKGQKVIIFDDVLATGGTAKALKKLVEKAGGEVVAMSFLIELSYLNPRDILKDENIISLIIL</sequence>
<proteinExistence type="inferred from homology"/>
<feature type="chain" id="PRO_1000116183" description="Adenine phosphoribosyltransferase">
    <location>
        <begin position="1"/>
        <end position="170"/>
    </location>
</feature>
<protein>
    <recommendedName>
        <fullName evidence="1">Adenine phosphoribosyltransferase</fullName>
        <shortName evidence="1">APRT</shortName>
        <ecNumber evidence="1">2.4.2.7</ecNumber>
    </recommendedName>
</protein>